<reference key="1">
    <citation type="journal article" date="2006" name="J. Virol.">
        <title>Comparative analysis of 22 coronavirus HKU1 genomes reveals a novel genotype and evidence of natural recombination in coronavirus HKU1.</title>
        <authorList>
            <person name="Woo P.C.Y."/>
            <person name="Lau S.K.P."/>
            <person name="Yip C.C.Y."/>
            <person name="Huang Y."/>
            <person name="Tsoi H.-W."/>
            <person name="Chan K.-H."/>
            <person name="Yuen K.-Y."/>
        </authorList>
    </citation>
    <scope>NUCLEOTIDE SEQUENCE [GENOMIC RNA]</scope>
</reference>
<proteinExistence type="inferred from homology"/>
<feature type="chain" id="PRO_0000297765" description="Protein I">
    <location>
        <begin position="1"/>
        <end position="205"/>
    </location>
</feature>
<dbReference type="EMBL" id="AY884001">
    <property type="status" value="NOT_ANNOTATED_CDS"/>
    <property type="molecule type" value="Genomic_RNA"/>
</dbReference>
<dbReference type="Proteomes" id="UP000006551">
    <property type="component" value="Genome"/>
</dbReference>
<dbReference type="GO" id="GO:0044423">
    <property type="term" value="C:virion component"/>
    <property type="evidence" value="ECO:0007669"/>
    <property type="project" value="UniProtKB-KW"/>
</dbReference>
<dbReference type="CDD" id="cd21662">
    <property type="entry name" value="embe-CoV_Protein-I_like"/>
    <property type="match status" value="1"/>
</dbReference>
<dbReference type="InterPro" id="IPR004876">
    <property type="entry name" value="Corona_nucI"/>
</dbReference>
<dbReference type="InterPro" id="IPR044311">
    <property type="entry name" value="N2-like_embe-CoV"/>
</dbReference>
<dbReference type="Pfam" id="PF03187">
    <property type="entry name" value="Corona_I"/>
    <property type="match status" value="1"/>
</dbReference>
<gene>
    <name type="primary">N</name>
    <name type="synonym">I</name>
    <name type="ORF">7b</name>
</gene>
<protein>
    <recommendedName>
        <fullName>Protein I</fullName>
    </recommendedName>
    <alternativeName>
        <fullName>Accessory protein N2</fullName>
    </alternativeName>
    <alternativeName>
        <fullName>N internal ORF protein</fullName>
        <shortName>IORF</shortName>
    </alternativeName>
    <alternativeName>
        <fullName>Orf8 protein</fullName>
    </alternativeName>
    <alternativeName>
        <fullName>Protein in nucleocapsid ORF</fullName>
    </alternativeName>
</protein>
<name>IORF_CVHN2</name>
<comment type="function">
    <text evidence="1">Structural protein that is not essential for the viral replication either in tissue culture or in its natural host.</text>
</comment>
<comment type="subcellular location">
    <subcellularLocation>
        <location evidence="1">Virion</location>
    </subcellularLocation>
</comment>
<comment type="miscellaneous">
    <text>The gene encoding this protein is included within the N gene (alternative ORF).</text>
</comment>
<comment type="miscellaneous">
    <text>Isolate N2 belongs to genotype B.</text>
</comment>
<comment type="similarity">
    <text evidence="2">Belongs to the coronavirus I protein family.</text>
</comment>
<accession>P0C5B5</accession>
<keyword id="KW-0946">Virion</keyword>
<evidence type="ECO:0000250" key="1"/>
<evidence type="ECO:0000305" key="2"/>
<organism>
    <name type="scientific">Human coronavirus HKU1 (isolate N2)</name>
    <name type="common">HCoV-HKU1</name>
    <dbReference type="NCBI Taxonomy" id="443240"/>
    <lineage>
        <taxon>Viruses</taxon>
        <taxon>Riboviria</taxon>
        <taxon>Orthornavirae</taxon>
        <taxon>Pisuviricota</taxon>
        <taxon>Pisoniviricetes</taxon>
        <taxon>Nidovirales</taxon>
        <taxon>Cornidovirineae</taxon>
        <taxon>Coronaviridae</taxon>
        <taxon>Orthocoronavirinae</taxon>
        <taxon>Betacoronavirus</taxon>
        <taxon>Embecovirus</taxon>
        <taxon>Human coronavirus HKU1</taxon>
    </lineage>
</organism>
<organismHost>
    <name type="scientific">Homo sapiens</name>
    <name type="common">Human</name>
    <dbReference type="NCBI Taxonomy" id="9606"/>
</organismHost>
<sequence length="205" mass="22718">MLEVEAPLEIVQESSRKLLGLTNLSEAIKPIIEAENPNPNSLCLLNHKETLSHIIPGSLGLPNFKKVETLNFQMVKEYPLLTGYPLLKQKDIGINTTGVLLKQLMVNKSSCYQDGISTISVPVHMPVHPMVMPTKVSSGSLVTKLTLLFPPMFRQGILLFKKLSLLGFRLVRFCLKAIMLKAQEGLLLIAGQVHVLNHVDPIIVH</sequence>